<reference key="1">
    <citation type="journal article" date="2004" name="Genome Res.">
        <title>The status, quality, and expansion of the NIH full-length cDNA project: the Mammalian Gene Collection (MGC).</title>
        <authorList>
            <consortium name="The MGC Project Team"/>
        </authorList>
    </citation>
    <scope>NUCLEOTIDE SEQUENCE [LARGE SCALE MRNA]</scope>
    <source>
        <tissue>Testis</tissue>
    </source>
</reference>
<name>DRC1_RAT</name>
<evidence type="ECO:0000250" key="1">
    <source>
        <dbReference type="UniProtKB" id="P0DL09"/>
    </source>
</evidence>
<evidence type="ECO:0000250" key="2">
    <source>
        <dbReference type="UniProtKB" id="Q96MC2"/>
    </source>
</evidence>
<evidence type="ECO:0000255" key="3"/>
<evidence type="ECO:0000256" key="4">
    <source>
        <dbReference type="SAM" id="MobiDB-lite"/>
    </source>
</evidence>
<evidence type="ECO:0000305" key="5"/>
<sequence length="754" mass="88310">MNPSGSIGVLEQNGEEHLAAPILGPSVNSDNPQERIQARRLRIAARQEARRREALGEYLDGKKESEEEQSKSYKQKEESRLKLTKLLLCGTELVTNIQVAADIREIHRRVEEEETKRQRLEKLENEVKTSQDKFDEITSKWEEGRQKRIPQELWEMLNNQQVHCAGLVEDKNKLISELQQELKIKDDQYVKDLKKQSEDITVLLERMEEQVKSVMKNFRQELNYIEKAFESERQELLTTNKKKWERALQAHNAKELEYLINRMKRVEDYEKQLNRQRVWDCEEYNSIKIKLEQDVQILEQQLQQMKATYQLNQEKLEYNFQVLKKRDEESTVIKSQQKRKLNRLHDILNNLRTKYSKQIKQFQEDNQSLTSDYKRLVTQFKDLQKAIRHFIIIDQDKFREIWLMNEAEAKELAQRAFDVDKIIHSQHLGLPWKIPNFWFLNNVGPISLQQQQKSVTQILEELLLQSEDEGTETAMSEDESYMDLPNQVSAKTTKKILVLLCDESGFLIESKLLSLLLPLEKSECYLLRLDAIFSALGIESEDDLYKMVNFFLRFKAHHLSSAQVSISTHSNAERTSLVSALQHMSLMSQTDRRSSASKSDGDPTELEDQQGSDNGSLMGRELVEQEDLSSPMFIHPNDVLKILDAFVTGLKKPKDARPVQRLKKDTRNNLKDTEYWESLAMVIPFSKQNLWDALFKALEKYYLVLTQRAKLLMENDSLEQQNAEMQSLLQQYLQAKVNLELQVPPTQGFRMPSK</sequence>
<accession>Q5XI65</accession>
<feature type="chain" id="PRO_0000277884" description="Dynein regulatory complex protein 1">
    <location>
        <begin position="1"/>
        <end position="754"/>
    </location>
</feature>
<feature type="region of interest" description="Disordered" evidence="4">
    <location>
        <begin position="1"/>
        <end position="32"/>
    </location>
</feature>
<feature type="region of interest" description="Disordered" evidence="4">
    <location>
        <begin position="55"/>
        <end position="76"/>
    </location>
</feature>
<feature type="region of interest" description="Disordered" evidence="4">
    <location>
        <begin position="587"/>
        <end position="616"/>
    </location>
</feature>
<feature type="coiled-coil region" evidence="3">
    <location>
        <begin position="98"/>
        <end position="388"/>
    </location>
</feature>
<feature type="coiled-coil region" evidence="3">
    <location>
        <begin position="704"/>
        <end position="743"/>
    </location>
</feature>
<keyword id="KW-0966">Cell projection</keyword>
<keyword id="KW-0969">Cilium</keyword>
<keyword id="KW-0175">Coiled coil</keyword>
<keyword id="KW-0963">Cytoplasm</keyword>
<keyword id="KW-0206">Cytoskeleton</keyword>
<keyword id="KW-0282">Flagellum</keyword>
<keyword id="KW-1185">Reference proteome</keyword>
<protein>
    <recommendedName>
        <fullName>Dynein regulatory complex protein 1</fullName>
    </recommendedName>
    <alternativeName>
        <fullName>Coiled-coil domain-containing protein 164</fullName>
    </alternativeName>
</protein>
<gene>
    <name type="primary">Drc1</name>
    <name type="synonym">Ccdc164</name>
</gene>
<comment type="function">
    <text evidence="1 2">Component of the nexin-dynein regulatory complex (N-DRC) a key regulator of ciliary/flagellar motility which maintains the alignment and integrity of the distal axoneme and regulates microtubule sliding in motile axonemes. Plays a critical role in the assembly of N-DRC and also stabilizes the assembly of multiple inner dynein arms and radial spokes. Coassembles with CCDC65/DRC2 to form a central scaffold needed for assembly of the N-DRC and its attachment to the outer doublet microtubules.</text>
</comment>
<comment type="subunit">
    <text evidence="1 2">Component of the nexin-dynein regulatory complex (N-DRC). Interacts with CCDC65/DRC2, DRC3, GAS8/DRC4 and TCTE1/DRC5.</text>
</comment>
<comment type="subcellular location">
    <subcellularLocation>
        <location evidence="1">Cytoplasm</location>
        <location evidence="1">Cytoskeleton</location>
        <location evidence="1">Cilium axoneme</location>
    </subcellularLocation>
    <subcellularLocation>
        <location evidence="1">Cytoplasm</location>
        <location evidence="1">Cytoskeleton</location>
        <location evidence="1">Flagellum axoneme</location>
    </subcellularLocation>
</comment>
<comment type="similarity">
    <text evidence="5">Belongs to the DRC1 family.</text>
</comment>
<proteinExistence type="evidence at transcript level"/>
<organism>
    <name type="scientific">Rattus norvegicus</name>
    <name type="common">Rat</name>
    <dbReference type="NCBI Taxonomy" id="10116"/>
    <lineage>
        <taxon>Eukaryota</taxon>
        <taxon>Metazoa</taxon>
        <taxon>Chordata</taxon>
        <taxon>Craniata</taxon>
        <taxon>Vertebrata</taxon>
        <taxon>Euteleostomi</taxon>
        <taxon>Mammalia</taxon>
        <taxon>Eutheria</taxon>
        <taxon>Euarchontoglires</taxon>
        <taxon>Glires</taxon>
        <taxon>Rodentia</taxon>
        <taxon>Myomorpha</taxon>
        <taxon>Muroidea</taxon>
        <taxon>Muridae</taxon>
        <taxon>Murinae</taxon>
        <taxon>Rattus</taxon>
    </lineage>
</organism>
<dbReference type="EMBL" id="BC083825">
    <property type="protein sequence ID" value="AAH83825.1"/>
    <property type="molecule type" value="mRNA"/>
</dbReference>
<dbReference type="RefSeq" id="NP_001007010.1">
    <property type="nucleotide sequence ID" value="NM_001007009.1"/>
</dbReference>
<dbReference type="SMR" id="Q5XI65"/>
<dbReference type="FunCoup" id="Q5XI65">
    <property type="interactions" value="124"/>
</dbReference>
<dbReference type="STRING" id="10116.ENSRNOP00000031362"/>
<dbReference type="GlyGen" id="Q5XI65">
    <property type="glycosylation" value="1 site"/>
</dbReference>
<dbReference type="iPTMnet" id="Q5XI65"/>
<dbReference type="PhosphoSitePlus" id="Q5XI65"/>
<dbReference type="PaxDb" id="10116-ENSRNOP00000031362"/>
<dbReference type="Ensembl" id="ENSRNOT00000036815.6">
    <property type="protein sequence ID" value="ENSRNOP00000031362.4"/>
    <property type="gene ID" value="ENSRNOG00000024905.6"/>
</dbReference>
<dbReference type="GeneID" id="362712"/>
<dbReference type="KEGG" id="rno:362712"/>
<dbReference type="AGR" id="RGD:1359318"/>
<dbReference type="CTD" id="92749"/>
<dbReference type="RGD" id="1359318">
    <property type="gene designation" value="Drc1"/>
</dbReference>
<dbReference type="eggNOG" id="ENOG502QQ2B">
    <property type="taxonomic scope" value="Eukaryota"/>
</dbReference>
<dbReference type="GeneTree" id="ENSGT00940000153804"/>
<dbReference type="HOGENOM" id="CLU_012489_1_0_1"/>
<dbReference type="InParanoid" id="Q5XI65"/>
<dbReference type="OMA" id="LDFMMAR"/>
<dbReference type="OrthoDB" id="10260459at2759"/>
<dbReference type="PhylomeDB" id="Q5XI65"/>
<dbReference type="TreeFam" id="TF324985"/>
<dbReference type="PRO" id="PR:Q5XI65"/>
<dbReference type="Proteomes" id="UP000002494">
    <property type="component" value="Chromosome 6"/>
</dbReference>
<dbReference type="Bgee" id="ENSRNOG00000024905">
    <property type="expression patterns" value="Expressed in testis and 6 other cell types or tissues"/>
</dbReference>
<dbReference type="GO" id="GO:0005858">
    <property type="term" value="C:axonemal dynein complex"/>
    <property type="evidence" value="ECO:0007669"/>
    <property type="project" value="InterPro"/>
</dbReference>
<dbReference type="GO" id="GO:0005930">
    <property type="term" value="C:axoneme"/>
    <property type="evidence" value="ECO:0000250"/>
    <property type="project" value="UniProtKB"/>
</dbReference>
<dbReference type="GO" id="GO:0005929">
    <property type="term" value="C:cilium"/>
    <property type="evidence" value="ECO:0000266"/>
    <property type="project" value="RGD"/>
</dbReference>
<dbReference type="GO" id="GO:0005829">
    <property type="term" value="C:cytosol"/>
    <property type="evidence" value="ECO:0000266"/>
    <property type="project" value="RGD"/>
</dbReference>
<dbReference type="GO" id="GO:0005576">
    <property type="term" value="C:extracellular region"/>
    <property type="evidence" value="ECO:0007669"/>
    <property type="project" value="GOC"/>
</dbReference>
<dbReference type="GO" id="GO:0036126">
    <property type="term" value="C:sperm flagellum"/>
    <property type="evidence" value="ECO:0000266"/>
    <property type="project" value="RGD"/>
</dbReference>
<dbReference type="GO" id="GO:0070286">
    <property type="term" value="P:axonemal dynein complex assembly"/>
    <property type="evidence" value="ECO:0000250"/>
    <property type="project" value="UniProtKB"/>
</dbReference>
<dbReference type="GO" id="GO:0035082">
    <property type="term" value="P:axoneme assembly"/>
    <property type="evidence" value="ECO:0000266"/>
    <property type="project" value="RGD"/>
</dbReference>
<dbReference type="GO" id="GO:0044782">
    <property type="term" value="P:cilium organization"/>
    <property type="evidence" value="ECO:0000266"/>
    <property type="project" value="RGD"/>
</dbReference>
<dbReference type="GO" id="GO:0060285">
    <property type="term" value="P:cilium-dependent cell motility"/>
    <property type="evidence" value="ECO:0000250"/>
    <property type="project" value="UniProtKB"/>
</dbReference>
<dbReference type="GO" id="GO:0007368">
    <property type="term" value="P:determination of left/right symmetry"/>
    <property type="evidence" value="ECO:0000266"/>
    <property type="project" value="RGD"/>
</dbReference>
<dbReference type="GO" id="GO:0007507">
    <property type="term" value="P:heart development"/>
    <property type="evidence" value="ECO:0000266"/>
    <property type="project" value="RGD"/>
</dbReference>
<dbReference type="GO" id="GO:0120197">
    <property type="term" value="P:mucociliary clearance"/>
    <property type="evidence" value="ECO:0007669"/>
    <property type="project" value="Ensembl"/>
</dbReference>
<dbReference type="GO" id="GO:0065003">
    <property type="term" value="P:protein-containing complex assembly"/>
    <property type="evidence" value="ECO:0000266"/>
    <property type="project" value="RGD"/>
</dbReference>
<dbReference type="GO" id="GO:0003352">
    <property type="term" value="P:regulation of cilium movement"/>
    <property type="evidence" value="ECO:0000318"/>
    <property type="project" value="GO_Central"/>
</dbReference>
<dbReference type="GO" id="GO:0007338">
    <property type="term" value="P:single fertilization"/>
    <property type="evidence" value="ECO:0000266"/>
    <property type="project" value="RGD"/>
</dbReference>
<dbReference type="GO" id="GO:0120316">
    <property type="term" value="P:sperm flagellum assembly"/>
    <property type="evidence" value="ECO:0000266"/>
    <property type="project" value="RGD"/>
</dbReference>
<dbReference type="InterPro" id="IPR039505">
    <property type="entry name" value="DRC1/2_N"/>
</dbReference>
<dbReference type="InterPro" id="IPR039750">
    <property type="entry name" value="DRC1/DRC2"/>
</dbReference>
<dbReference type="InterPro" id="IPR029440">
    <property type="entry name" value="DRC1_C"/>
</dbReference>
<dbReference type="PANTHER" id="PTHR21625:SF1">
    <property type="entry name" value="DYNEIN REGULATORY COMPLEX PROTEIN 1"/>
    <property type="match status" value="1"/>
</dbReference>
<dbReference type="PANTHER" id="PTHR21625">
    <property type="entry name" value="NYD-SP28 PROTEIN"/>
    <property type="match status" value="1"/>
</dbReference>
<dbReference type="Pfam" id="PF14772">
    <property type="entry name" value="NYD-SP28"/>
    <property type="match status" value="1"/>
</dbReference>
<dbReference type="Pfam" id="PF14775">
    <property type="entry name" value="NYD-SP28_assoc"/>
    <property type="match status" value="1"/>
</dbReference>